<accession>Q6BDA0</accession>
<accession>Q56WH6</accession>
<accession>Q9FYD7</accession>
<protein>
    <recommendedName>
        <fullName evidence="15">Lysine-specific demethylase ELF6</fullName>
        <ecNumber evidence="11 12">1.14.11.-</ecNumber>
    </recommendedName>
    <alternativeName>
        <fullName evidence="13">Early flowering 6</fullName>
    </alternativeName>
    <alternativeName>
        <fullName evidence="14">Jumonji domain-containing protein 11</fullName>
        <shortName evidence="14">AtJMJ11</shortName>
        <shortName evidence="14">Protein JUMONJI 11</shortName>
    </alternativeName>
    <alternativeName>
        <fullName evidence="15">Lysine-specific histone demethylase ELF6</fullName>
    </alternativeName>
    <alternativeName>
        <fullName evidence="15">[histone H3]-trimethyl-L-lysine(27) monodemethylase JMJ11</fullName>
    </alternativeName>
</protein>
<proteinExistence type="evidence at protein level"/>
<comment type="function">
    <text evidence="7 8 10 11 12">Histone demethylase that demethylates 'Lys-27' (H3K27me) of histone H3, thus acting as a positive regulator of gene expression (PubMed:33107825). Demethylates tri-methylated (H3K27me3) and di-methylated (H3K27me2) H3K27me (PubMed:33107825). Inactive on H3K27me1, H3K4me3, H3K9me2 and H3K36me3 (PubMed:33107825). Acts as a repressor of the photoperiodic flowering pathway and of FT (PubMed:33107825). May also be active on H3K4me. Binds around the transcription start site of the FT locus. Required for epigenetic reprogramming by resetting the expression of the floral repressor FLC locus, thus aluviating cold-mediated FLC epigenetically silencing occurring during vernalization and preventing inapropriate epigenetic states inheritence (PubMed:25219852, PubMed:33107825).</text>
</comment>
<comment type="function">
    <text evidence="12">Together with REF6, required for H3K27me3 resetting (especially in constitutive heterochromatin within the pericentromeric regions) and transgenerational inheritance of histone marks, thus acting in safeguarding genome and epigenome integrity during sexual reproduction.</text>
</comment>
<comment type="catalytic activity">
    <reaction evidence="11 12">
        <text>N(6),N(6),N(6)-trimethyl-L-lysyl(27)-[histone H3] + 2-oxoglutarate + O2 = N(6),N(6)-dimethyl-L-lysyl(27)-[histone H3] + formaldehyde + succinate + CO2</text>
        <dbReference type="Rhea" id="RHEA:60228"/>
        <dbReference type="Rhea" id="RHEA-COMP:15535"/>
        <dbReference type="Rhea" id="RHEA-COMP:15539"/>
        <dbReference type="ChEBI" id="CHEBI:15379"/>
        <dbReference type="ChEBI" id="CHEBI:16526"/>
        <dbReference type="ChEBI" id="CHEBI:16810"/>
        <dbReference type="ChEBI" id="CHEBI:16842"/>
        <dbReference type="ChEBI" id="CHEBI:30031"/>
        <dbReference type="ChEBI" id="CHEBI:61961"/>
        <dbReference type="ChEBI" id="CHEBI:61976"/>
    </reaction>
    <physiologicalReaction direction="left-to-right" evidence="11 12">
        <dbReference type="Rhea" id="RHEA:60229"/>
    </physiologicalReaction>
</comment>
<comment type="catalytic activity">
    <reaction evidence="11 12">
        <text>N(6),N(6)-dimethyl-L-lysyl(27)-[histone H3] + 2-oxoglutarate + O2 = N(6)-methyl-L-lysyl(27)-[histone H3] + formaldehyde + succinate + CO2</text>
        <dbReference type="Rhea" id="RHEA:60232"/>
        <dbReference type="Rhea" id="RHEA-COMP:15539"/>
        <dbReference type="Rhea" id="RHEA-COMP:15544"/>
        <dbReference type="ChEBI" id="CHEBI:15379"/>
        <dbReference type="ChEBI" id="CHEBI:16526"/>
        <dbReference type="ChEBI" id="CHEBI:16810"/>
        <dbReference type="ChEBI" id="CHEBI:16842"/>
        <dbReference type="ChEBI" id="CHEBI:30031"/>
        <dbReference type="ChEBI" id="CHEBI:61929"/>
        <dbReference type="ChEBI" id="CHEBI:61976"/>
    </reaction>
    <physiologicalReaction direction="left-to-right" evidence="11 12">
        <dbReference type="Rhea" id="RHEA:60233"/>
    </physiologicalReaction>
</comment>
<comment type="subunit">
    <text evidence="8">Interacts with BZR2 (via N-terminus).</text>
</comment>
<comment type="interaction">
    <interactant intactId="EBI-1798417">
        <id>Q6BDA0</id>
    </interactant>
    <interactant intactId="EBI-617078">
        <id>Q9LN63</id>
        <label>BZR2</label>
    </interactant>
    <organismsDiffer>false</organismsDiffer>
    <experiments>3</experiments>
</comment>
<comment type="subcellular location">
    <subcellularLocation>
        <location evidence="3 5">Nucleus</location>
    </subcellularLocation>
</comment>
<comment type="tissue specificity">
    <text evidence="7 9 11">Expressed at low levels in seedlings, cotyledons and leaves (PubMed:25219852). Detected in inflorescences, stems, roots and siliques but not in shoot apical meristems or root tips. Accumulates in flowers and embryos (PubMed:25219852).</text>
</comment>
<comment type="disruption phenotype">
    <text evidence="7 8 11 12">Early flowering a reduced number of rosette leaves at bolting stage, but normal development of all other organs (PubMed:25219852, PubMed:33107825). Hyper-methylated genes with accumulation of H3K27me3 histone marks (PubMed:33107825). Reduced FLC expression (PubMed:25219852). Partially redundant with JMJ14. Brassinosteroid-insensitive phenotype. Plants lacking both REF6 and ELF6 have several growth defects, such as increased number of petals, reduced silique length, embryos with patterning defects, and pleiotropic defects in leaf morphology, such as serrations and downward curling; these defects are caused by epimutations arising in offspring lineage due to a lack of H3K27me3 resetting during sexual reproduction (PubMed:33107825).</text>
</comment>
<comment type="similarity">
    <text evidence="15">Belongs to the JHDM3 histone demethylase family.</text>
</comment>
<comment type="sequence caution" evidence="15">
    <conflict type="erroneous initiation">
        <sequence resource="EMBL-CDS" id="BAD94870"/>
    </conflict>
    <text>Truncated N-terminus.</text>
</comment>
<comment type="sequence caution" evidence="15">
    <conflict type="erroneous gene model prediction">
        <sequence resource="EMBL-CDS" id="CAC05506"/>
    </conflict>
</comment>
<organism>
    <name type="scientific">Arabidopsis thaliana</name>
    <name type="common">Mouse-ear cress</name>
    <dbReference type="NCBI Taxonomy" id="3702"/>
    <lineage>
        <taxon>Eukaryota</taxon>
        <taxon>Viridiplantae</taxon>
        <taxon>Streptophyta</taxon>
        <taxon>Embryophyta</taxon>
        <taxon>Tracheophyta</taxon>
        <taxon>Spermatophyta</taxon>
        <taxon>Magnoliopsida</taxon>
        <taxon>eudicotyledons</taxon>
        <taxon>Gunneridae</taxon>
        <taxon>Pentapetalae</taxon>
        <taxon>rosids</taxon>
        <taxon>malvids</taxon>
        <taxon>Brassicales</taxon>
        <taxon>Brassicaceae</taxon>
        <taxon>Camelineae</taxon>
        <taxon>Arabidopsis</taxon>
    </lineage>
</organism>
<reference key="1">
    <citation type="journal article" date="2004" name="Plant Cell">
        <title>Divergent roles of a pair of homologous jumonji/zinc-finger-class transcription factor proteins in the regulation of Arabidopsis flowering time.</title>
        <authorList>
            <person name="Noh B."/>
            <person name="Lee S.-H."/>
            <person name="Kim H.-J."/>
            <person name="Yi G."/>
            <person name="Shin E.-A."/>
            <person name="Lee M."/>
            <person name="Jung K.-J."/>
            <person name="Doyle M.R."/>
            <person name="Amasino R.M."/>
            <person name="Noh Y.-S."/>
        </authorList>
    </citation>
    <scope>NUCLEOTIDE SEQUENCE [MRNA]</scope>
    <scope>FUNCTION</scope>
    <scope>DISRUPTION PHENOTYPE</scope>
    <scope>TISSUE SPECIFICITY</scope>
</reference>
<reference key="2">
    <citation type="journal article" date="2000" name="Nature">
        <title>Sequence and analysis of chromosome 5 of the plant Arabidopsis thaliana.</title>
        <authorList>
            <person name="Tabata S."/>
            <person name="Kaneko T."/>
            <person name="Nakamura Y."/>
            <person name="Kotani H."/>
            <person name="Kato T."/>
            <person name="Asamizu E."/>
            <person name="Miyajima N."/>
            <person name="Sasamoto S."/>
            <person name="Kimura T."/>
            <person name="Hosouchi T."/>
            <person name="Kawashima K."/>
            <person name="Kohara M."/>
            <person name="Matsumoto M."/>
            <person name="Matsuno A."/>
            <person name="Muraki A."/>
            <person name="Nakayama S."/>
            <person name="Nakazaki N."/>
            <person name="Naruo K."/>
            <person name="Okumura S."/>
            <person name="Shinpo S."/>
            <person name="Takeuchi C."/>
            <person name="Wada T."/>
            <person name="Watanabe A."/>
            <person name="Yamada M."/>
            <person name="Yasuda M."/>
            <person name="Sato S."/>
            <person name="de la Bastide M."/>
            <person name="Huang E."/>
            <person name="Spiegel L."/>
            <person name="Gnoj L."/>
            <person name="O'Shaughnessy A."/>
            <person name="Preston R."/>
            <person name="Habermann K."/>
            <person name="Murray J."/>
            <person name="Johnson D."/>
            <person name="Rohlfing T."/>
            <person name="Nelson J."/>
            <person name="Stoneking T."/>
            <person name="Pepin K."/>
            <person name="Spieth J."/>
            <person name="Sekhon M."/>
            <person name="Armstrong J."/>
            <person name="Becker M."/>
            <person name="Belter E."/>
            <person name="Cordum H."/>
            <person name="Cordes M."/>
            <person name="Courtney L."/>
            <person name="Courtney W."/>
            <person name="Dante M."/>
            <person name="Du H."/>
            <person name="Edwards J."/>
            <person name="Fryman J."/>
            <person name="Haakensen B."/>
            <person name="Lamar E."/>
            <person name="Latreille P."/>
            <person name="Leonard S."/>
            <person name="Meyer R."/>
            <person name="Mulvaney E."/>
            <person name="Ozersky P."/>
            <person name="Riley A."/>
            <person name="Strowmatt C."/>
            <person name="Wagner-McPherson C."/>
            <person name="Wollam A."/>
            <person name="Yoakum M."/>
            <person name="Bell M."/>
            <person name="Dedhia N."/>
            <person name="Parnell L."/>
            <person name="Shah R."/>
            <person name="Rodriguez M."/>
            <person name="Hoon See L."/>
            <person name="Vil D."/>
            <person name="Baker J."/>
            <person name="Kirchoff K."/>
            <person name="Toth K."/>
            <person name="King L."/>
            <person name="Bahret A."/>
            <person name="Miller B."/>
            <person name="Marra M.A."/>
            <person name="Martienssen R."/>
            <person name="McCombie W.R."/>
            <person name="Wilson R.K."/>
            <person name="Murphy G."/>
            <person name="Bancroft I."/>
            <person name="Volckaert G."/>
            <person name="Wambutt R."/>
            <person name="Duesterhoeft A."/>
            <person name="Stiekema W."/>
            <person name="Pohl T."/>
            <person name="Entian K.-D."/>
            <person name="Terryn N."/>
            <person name="Hartley N."/>
            <person name="Bent E."/>
            <person name="Johnson S."/>
            <person name="Langham S.-A."/>
            <person name="McCullagh B."/>
            <person name="Robben J."/>
            <person name="Grymonprez B."/>
            <person name="Zimmermann W."/>
            <person name="Ramsperger U."/>
            <person name="Wedler H."/>
            <person name="Balke K."/>
            <person name="Wedler E."/>
            <person name="Peters S."/>
            <person name="van Staveren M."/>
            <person name="Dirkse W."/>
            <person name="Mooijman P."/>
            <person name="Klein Lankhorst R."/>
            <person name="Weitzenegger T."/>
            <person name="Bothe G."/>
            <person name="Rose M."/>
            <person name="Hauf J."/>
            <person name="Berneiser S."/>
            <person name="Hempel S."/>
            <person name="Feldpausch M."/>
            <person name="Lamberth S."/>
            <person name="Villarroel R."/>
            <person name="Gielen J."/>
            <person name="Ardiles W."/>
            <person name="Bents O."/>
            <person name="Lemcke K."/>
            <person name="Kolesov G."/>
            <person name="Mayer K.F.X."/>
            <person name="Rudd S."/>
            <person name="Schoof H."/>
            <person name="Schueller C."/>
            <person name="Zaccaria P."/>
            <person name="Mewes H.-W."/>
            <person name="Bevan M."/>
            <person name="Fransz P.F."/>
        </authorList>
    </citation>
    <scope>NUCLEOTIDE SEQUENCE [LARGE SCALE GENOMIC DNA]</scope>
    <source>
        <strain>cv. Columbia</strain>
    </source>
</reference>
<reference key="3">
    <citation type="journal article" date="2017" name="Plant J.">
        <title>Araport11: a complete reannotation of the Arabidopsis thaliana reference genome.</title>
        <authorList>
            <person name="Cheng C.Y."/>
            <person name="Krishnakumar V."/>
            <person name="Chan A.P."/>
            <person name="Thibaud-Nissen F."/>
            <person name="Schobel S."/>
            <person name="Town C.D."/>
        </authorList>
    </citation>
    <scope>GENOME REANNOTATION</scope>
    <source>
        <strain>cv. Columbia</strain>
    </source>
</reference>
<reference key="4">
    <citation type="submission" date="2005-03" db="EMBL/GenBank/DDBJ databases">
        <title>Large-scale analysis of RIKEN Arabidopsis full-length (RAFL) cDNAs.</title>
        <authorList>
            <person name="Totoki Y."/>
            <person name="Seki M."/>
            <person name="Ishida J."/>
            <person name="Nakajima M."/>
            <person name="Enju A."/>
            <person name="Kamiya A."/>
            <person name="Narusaka M."/>
            <person name="Shin-i T."/>
            <person name="Nakagawa M."/>
            <person name="Sakamoto N."/>
            <person name="Oishi K."/>
            <person name="Kohara Y."/>
            <person name="Kobayashi M."/>
            <person name="Toyoda A."/>
            <person name="Sakaki Y."/>
            <person name="Sakurai T."/>
            <person name="Iida K."/>
            <person name="Akiyama K."/>
            <person name="Satou M."/>
            <person name="Toyoda T."/>
            <person name="Konagaya A."/>
            <person name="Carninci P."/>
            <person name="Kawai J."/>
            <person name="Hayashizaki Y."/>
            <person name="Shinozaki K."/>
        </authorList>
    </citation>
    <scope>NUCLEOTIDE SEQUENCE [LARGE SCALE MRNA] OF 858-1340</scope>
    <source>
        <strain>cv. Columbia</strain>
    </source>
</reference>
<reference key="5">
    <citation type="journal article" date="2008" name="BMC Evol. Biol.">
        <title>Evolutionary history of histone demethylase families: distinct evolutionary patterns suggest functional divergence.</title>
        <authorList>
            <person name="Zhou X."/>
            <person name="Ma H."/>
        </authorList>
    </citation>
    <scope>GENE FAMILY</scope>
    <scope>NOMENCLATURE</scope>
</reference>
<reference key="6">
    <citation type="journal article" date="2008" name="J. Integr. Plant Biol.">
        <title>Comparative analysis of JmjC domain-containing proteins reveals the potential histone demethylases in Arabidopsis and rice.</title>
        <authorList>
            <person name="Lu F."/>
            <person name="Li G."/>
            <person name="Cui X."/>
            <person name="Liu C."/>
            <person name="Wang X.-J."/>
            <person name="Cao X."/>
        </authorList>
    </citation>
    <scope>GENE FAMILY</scope>
    <scope>NOMENCLATURE</scope>
    <scope>TISSUE SPECIFICITY</scope>
</reference>
<reference key="7">
    <citation type="journal article" date="2008" name="Proc. Natl. Acad. Sci. U.S.A.">
        <title>Modulation of brassinosteroid-regulated gene expression by Jumonji domain-containing proteins ELF6 and REF6 in Arabidopsis.</title>
        <authorList>
            <person name="Yu X."/>
            <person name="Li L."/>
            <person name="Li L."/>
            <person name="Guo M."/>
            <person name="Chory J."/>
            <person name="Yin Y."/>
        </authorList>
    </citation>
    <scope>FUNCTION</scope>
    <scope>INTERACTION WITH BZR2</scope>
    <scope>DISRUPTION PHENOTYPE</scope>
</reference>
<reference key="8">
    <citation type="journal article" date="2009" name="PLoS ONE">
        <title>Repression of FLOWERING LOCUS T chromatin by functionally redundant histone H3 lysine 4 demethylases in Arabidopsis.</title>
        <authorList>
            <person name="Jeong J.H."/>
            <person name="Song H.R."/>
            <person name="Ko J.H."/>
            <person name="Jeong Y.M."/>
            <person name="Kwon Y.E."/>
            <person name="Seol J.H."/>
            <person name="Amasino R.M."/>
            <person name="Noh B."/>
            <person name="Noh Y.S."/>
        </authorList>
    </citation>
    <scope>FUNCTION</scope>
</reference>
<reference key="9">
    <citation type="journal article" date="2014" name="Nature">
        <title>Epigenetic reprogramming that prevents transgenerational inheritance of the vernalized state.</title>
        <authorList>
            <person name="Crevillen P."/>
            <person name="Yang H."/>
            <person name="Cui X."/>
            <person name="Greeff C."/>
            <person name="Trick M."/>
            <person name="Qiu Q."/>
            <person name="Cao X."/>
            <person name="Dean C."/>
        </authorList>
    </citation>
    <scope>FUNCTION</scope>
    <scope>MUTAGENESIS OF ALA-424</scope>
    <scope>DISRUPTION PHENOTYPE</scope>
    <scope>CATALYTIC ACTIVITY</scope>
    <scope>TISSUE SPECIFICITY</scope>
    <source>
        <strain>cv. Columbia</strain>
        <strain>cv. Landsberg erecta</strain>
    </source>
</reference>
<reference key="10">
    <citation type="journal article" date="2020" name="Elife">
        <title>A new role for histone demethylases in the maintenance of plant genome integrity.</title>
        <authorList>
            <person name="Antunez-Sanchez J."/>
            <person name="Naish M."/>
            <person name="Ramirez-Prado J.S."/>
            <person name="Ohno S."/>
            <person name="Huang Y."/>
            <person name="Dawson A."/>
            <person name="Opassathian K."/>
            <person name="Manza-Mianza D."/>
            <person name="Ariel F."/>
            <person name="Raynaud C."/>
            <person name="Wibowo A."/>
            <person name="Daron J."/>
            <person name="Ueda M."/>
            <person name="Latrasse D."/>
            <person name="Slotkin R.K."/>
            <person name="Weigel D."/>
            <person name="Benhamed M."/>
            <person name="Gutierrez-Marcos J."/>
        </authorList>
    </citation>
    <scope>FUNCTION</scope>
    <scope>DISRUPTION PHENOTYPE</scope>
    <scope>CATALYTIC ACTIVITY</scope>
    <source>
        <strain>cv. Columbia</strain>
    </source>
</reference>
<gene>
    <name evidence="13" type="primary">ELF6</name>
    <name evidence="14" type="synonym">JMJ11</name>
    <name type="synonym">PKDM9B</name>
    <name evidence="16" type="ordered locus">At5g04240</name>
    <name evidence="17" type="ORF">F21E1.160</name>
</gene>
<evidence type="ECO:0000250" key="1">
    <source>
        <dbReference type="UniProtKB" id="Q9STM3"/>
    </source>
</evidence>
<evidence type="ECO:0000255" key="2">
    <source>
        <dbReference type="PROSITE-ProRule" id="PRU00042"/>
    </source>
</evidence>
<evidence type="ECO:0000255" key="3">
    <source>
        <dbReference type="PROSITE-ProRule" id="PRU00537"/>
    </source>
</evidence>
<evidence type="ECO:0000255" key="4">
    <source>
        <dbReference type="PROSITE-ProRule" id="PRU00538"/>
    </source>
</evidence>
<evidence type="ECO:0000255" key="5">
    <source>
        <dbReference type="PROSITE-ProRule" id="PRU00768"/>
    </source>
</evidence>
<evidence type="ECO:0000256" key="6">
    <source>
        <dbReference type="SAM" id="MobiDB-lite"/>
    </source>
</evidence>
<evidence type="ECO:0000269" key="7">
    <source>
    </source>
</evidence>
<evidence type="ECO:0000269" key="8">
    <source>
    </source>
</evidence>
<evidence type="ECO:0000269" key="9">
    <source>
    </source>
</evidence>
<evidence type="ECO:0000269" key="10">
    <source>
    </source>
</evidence>
<evidence type="ECO:0000269" key="11">
    <source>
    </source>
</evidence>
<evidence type="ECO:0000269" key="12">
    <source>
    </source>
</evidence>
<evidence type="ECO:0000303" key="13">
    <source>
    </source>
</evidence>
<evidence type="ECO:0000303" key="14">
    <source>
    </source>
</evidence>
<evidence type="ECO:0000305" key="15"/>
<evidence type="ECO:0000312" key="16">
    <source>
        <dbReference type="Araport" id="AT5G04240"/>
    </source>
</evidence>
<evidence type="ECO:0000312" key="17">
    <source>
        <dbReference type="EMBL" id="CAC05506.1"/>
    </source>
</evidence>
<feature type="chain" id="PRO_0000412632" description="Lysine-specific demethylase ELF6">
    <location>
        <begin position="1"/>
        <end position="1340"/>
    </location>
</feature>
<feature type="domain" description="JmjN" evidence="3">
    <location>
        <begin position="16"/>
        <end position="57"/>
    </location>
</feature>
<feature type="domain" description="JmjC" evidence="4">
    <location>
        <begin position="262"/>
        <end position="428"/>
    </location>
</feature>
<feature type="zinc finger region" description="C2H2-type 1" evidence="2">
    <location>
        <begin position="1228"/>
        <end position="1250"/>
    </location>
</feature>
<feature type="zinc finger region" description="C2H2-type 2" evidence="2">
    <location>
        <begin position="1251"/>
        <end position="1275"/>
    </location>
</feature>
<feature type="zinc finger region" description="C2H2-type 3" evidence="2">
    <location>
        <begin position="1281"/>
        <end position="1305"/>
    </location>
</feature>
<feature type="zinc finger region" description="C2H2-type 4" evidence="2">
    <location>
        <begin position="1311"/>
        <end position="1337"/>
    </location>
</feature>
<feature type="region of interest" description="Disordered" evidence="6">
    <location>
        <begin position="195"/>
        <end position="245"/>
    </location>
</feature>
<feature type="region of interest" description="Disordered" evidence="6">
    <location>
        <begin position="1092"/>
        <end position="1225"/>
    </location>
</feature>
<feature type="region of interest" description="DNA-binding" evidence="1">
    <location>
        <begin position="1260"/>
        <end position="1333"/>
    </location>
</feature>
<feature type="short sequence motif" description="Nuclear localization signal 1" evidence="5">
    <location>
        <begin position="818"/>
        <end position="825"/>
    </location>
</feature>
<feature type="short sequence motif" description="Nuclear localization signal 2" evidence="5">
    <location>
        <begin position="1248"/>
        <end position="1255"/>
    </location>
</feature>
<feature type="compositionally biased region" description="Basic and acidic residues" evidence="6">
    <location>
        <begin position="217"/>
        <end position="227"/>
    </location>
</feature>
<feature type="compositionally biased region" description="Polar residues" evidence="6">
    <location>
        <begin position="1099"/>
        <end position="1115"/>
    </location>
</feature>
<feature type="compositionally biased region" description="Low complexity" evidence="6">
    <location>
        <begin position="1124"/>
        <end position="1133"/>
    </location>
</feature>
<feature type="compositionally biased region" description="Basic and acidic residues" evidence="6">
    <location>
        <begin position="1188"/>
        <end position="1201"/>
    </location>
</feature>
<feature type="compositionally biased region" description="Polar residues" evidence="6">
    <location>
        <begin position="1215"/>
        <end position="1225"/>
    </location>
</feature>
<feature type="binding site" evidence="4">
    <location>
        <position position="305"/>
    </location>
    <ligand>
        <name>Fe cation</name>
        <dbReference type="ChEBI" id="CHEBI:24875"/>
        <note>catalytic</note>
    </ligand>
</feature>
<feature type="binding site" evidence="4">
    <location>
        <position position="307"/>
    </location>
    <ligand>
        <name>Fe cation</name>
        <dbReference type="ChEBI" id="CHEBI:24875"/>
        <note>catalytic</note>
    </ligand>
</feature>
<feature type="binding site" evidence="4">
    <location>
        <position position="396"/>
    </location>
    <ligand>
        <name>Fe cation</name>
        <dbReference type="ChEBI" id="CHEBI:24875"/>
        <note>catalytic</note>
    </ligand>
</feature>
<feature type="binding site" evidence="1">
    <location>
        <position position="1230"/>
    </location>
    <ligand>
        <name>Zn(2+)</name>
        <dbReference type="ChEBI" id="CHEBI:29105"/>
        <label>1</label>
    </ligand>
</feature>
<feature type="binding site" evidence="1">
    <location>
        <position position="1235"/>
    </location>
    <ligand>
        <name>Zn(2+)</name>
        <dbReference type="ChEBI" id="CHEBI:29105"/>
        <label>1</label>
    </ligand>
</feature>
<feature type="binding site" evidence="1">
    <location>
        <position position="1248"/>
    </location>
    <ligand>
        <name>Zn(2+)</name>
        <dbReference type="ChEBI" id="CHEBI:29105"/>
        <label>1</label>
    </ligand>
</feature>
<feature type="binding site" evidence="1">
    <location>
        <position position="1253"/>
    </location>
    <ligand>
        <name>Zn(2+)</name>
        <dbReference type="ChEBI" id="CHEBI:29105"/>
        <label>2</label>
    </ligand>
</feature>
<feature type="binding site" evidence="1">
    <location>
        <position position="1258"/>
    </location>
    <ligand>
        <name>Zn(2+)</name>
        <dbReference type="ChEBI" id="CHEBI:29105"/>
        <label>2</label>
    </ligand>
</feature>
<feature type="binding site" evidence="1">
    <location>
        <position position="1265"/>
    </location>
    <ligand>
        <name>Zn(2+)</name>
        <dbReference type="ChEBI" id="CHEBI:29105"/>
        <label>1</label>
    </ligand>
</feature>
<feature type="binding site" evidence="1">
    <location>
        <position position="1271"/>
    </location>
    <ligand>
        <name>Zn(2+)</name>
        <dbReference type="ChEBI" id="CHEBI:29105"/>
        <label>2</label>
    </ligand>
</feature>
<feature type="binding site" evidence="1">
    <location>
        <position position="1275"/>
    </location>
    <ligand>
        <name>Zn(2+)</name>
        <dbReference type="ChEBI" id="CHEBI:29105"/>
        <label>2</label>
    </ligand>
</feature>
<feature type="binding site" evidence="1">
    <location>
        <position position="1283"/>
    </location>
    <ligand>
        <name>Zn(2+)</name>
        <dbReference type="ChEBI" id="CHEBI:29105"/>
        <label>3</label>
    </ligand>
</feature>
<feature type="binding site" evidence="1">
    <location>
        <position position="1288"/>
    </location>
    <ligand>
        <name>Zn(2+)</name>
        <dbReference type="ChEBI" id="CHEBI:29105"/>
        <label>3</label>
    </ligand>
</feature>
<feature type="binding site" evidence="1">
    <location>
        <position position="1301"/>
    </location>
    <ligand>
        <name>Zn(2+)</name>
        <dbReference type="ChEBI" id="CHEBI:29105"/>
        <label>3</label>
    </ligand>
</feature>
<feature type="binding site" evidence="1">
    <location>
        <position position="1305"/>
    </location>
    <ligand>
        <name>Zn(2+)</name>
        <dbReference type="ChEBI" id="CHEBI:29105"/>
        <label>3</label>
    </ligand>
</feature>
<feature type="binding site" evidence="1">
    <location>
        <position position="1313"/>
    </location>
    <ligand>
        <name>Zn(2+)</name>
        <dbReference type="ChEBI" id="CHEBI:29105"/>
        <label>4</label>
    </ligand>
</feature>
<feature type="binding site" evidence="1">
    <location>
        <position position="1318"/>
    </location>
    <ligand>
        <name>Zn(2+)</name>
        <dbReference type="ChEBI" id="CHEBI:29105"/>
        <label>4</label>
    </ligand>
</feature>
<feature type="binding site" evidence="1">
    <location>
        <position position="1331"/>
    </location>
    <ligand>
        <name>Zn(2+)</name>
        <dbReference type="ChEBI" id="CHEBI:29105"/>
        <label>4</label>
    </ligand>
</feature>
<feature type="binding site" evidence="1">
    <location>
        <position position="1337"/>
    </location>
    <ligand>
        <name>Zn(2+)</name>
        <dbReference type="ChEBI" id="CHEBI:29105"/>
        <label>4</label>
    </ligand>
</feature>
<feature type="mutagenesis site" description="In elf6-5; reduced the H3K27 demethylase activity, defective in the reactivation of FLC after vernalization due to H3K4me accumulation at its locus, and reduced FLC levels, especially in flowers and siliques." evidence="11">
    <original>A</original>
    <variation>V</variation>
    <location>
        <position position="424"/>
    </location>
</feature>
<name>ELF6_ARATH</name>
<sequence>MGNVEIPNWLKALPLAPVFRPTDTEFADPIAYISKIEKEASAFGICKIIPPLPKPSKKYVFYNLNKSLLKCPELVSDVDISKVCKEDRAVFTTRQQELGQTVKKNKGEKGKSNSQRSGVKQVWQSGGVYTLDQFEAKSKAFYKTQLGTVKELAPVVIEALFWKAALEKPIYIEYANDVPGSAFGEPEDHFRHFRQRKRRGRGFYQRKTENNDPSGKNGEKSSPEVEKAPLASTSLSSQDSSKQKNMDIVDEMEGTAGWKLSNSSWNLQMIARSPGSVTRFMPDDIPGVTSPMVYIGMLFSWFAWHVEDHELHSMNYLHTGSPKTWYAVPCDYALDFEEVIRKNSYGRNIDQLAALTQLGEKTTLVSPEMIVASGIPCCRLVQNPGEFVVTFPRSYHVGFSHGFNCGEAANFGTPQWLNVAKEAAVRRAAMNYLPMLSHQQLLYLLTMSFVSRVPRSLLPGGRSSRLRDRQREEREFLVKRAFVEDILNENKNLSVLLREPGSRLVMWDPDLLPRHSALALAAAGVAGASAVSPPAVAKKELEEGHSELQNKEKTSLLEELSLFMEKLNDVYYDDDDGLLNDFQVDTGTLPCVACGVLGFPFMSVVQPSEKALKDLSERQGETDAQEIMTLSSEKSDCEWKTSSRYIRPRIFCLEHTIELQRLLQSRGGLKFLVICHKDFQKFKAHAAIVAEEVKVPFSYDDVLLESASQEELSLIDLAIEDEEKYEHSVDWTSELGINLRYCVKVRKNSPTKKIQHALSLGGLFSDTSQMLDFTTIRWLQRKSRSKAKPSSTSSFTPCEHLEVKADGKLRDNLDSQTGKKEEKIIQYSRKKKLNPKPSAEQVQELATLAKSKDFDKTCKNFSSRSHLDSAIRSEMNSEIGDSGRVIGVSFSINPCSSSFTVGHGQEHPEITVKFGSDLDGNVTNSLSMVNGDSADLTLTSISREQHQGHSMTSNNNGSNSGSHVVASQTILVSTGDNHDGPRKLSGDYVCSDVSVRGIQEAVEMSDQEFGEPRSTVTNIEDEQQSQIVKPTQREAVFGDHEQVEGAEAVSTRENLCSEIILHTEHSSAHVGMEIPDINTASENLVVDMTHDGEPLESSDILSSSNGDEASSNGLQVLNDELSMESEVSSSENTEVIEAPNSMGEAKKKRKIESESETNDNPESSIGFIRSPCEGLRSRGKRKATCETSLKHTETSDEEKKPIAKRLKKTPKACSGSRQQEVPTTTHPNRCYLEGCKMTFESKAKLQTHKRNRCTHEGCGKKFRAHKYLVLHQRVHKDERPFECSWKGCSMTFKWQWARTEHLRLHTGERPYICKVDGCGLSFRFVSDYSRHRRKTMHYVT</sequence>
<dbReference type="EC" id="1.14.11.-" evidence="11 12"/>
<dbReference type="EMBL" id="AY664500">
    <property type="protein sequence ID" value="AAT77780.1"/>
    <property type="molecule type" value="mRNA"/>
</dbReference>
<dbReference type="EMBL" id="AL391716">
    <property type="protein sequence ID" value="CAC05506.1"/>
    <property type="status" value="ALT_SEQ"/>
    <property type="molecule type" value="Genomic_DNA"/>
</dbReference>
<dbReference type="EMBL" id="CP002688">
    <property type="protein sequence ID" value="AED90717.1"/>
    <property type="molecule type" value="Genomic_DNA"/>
</dbReference>
<dbReference type="EMBL" id="AK222064">
    <property type="protein sequence ID" value="BAD94870.1"/>
    <property type="status" value="ALT_INIT"/>
    <property type="molecule type" value="mRNA"/>
</dbReference>
<dbReference type="RefSeq" id="NP_196044.2">
    <property type="nucleotide sequence ID" value="NM_120506.5"/>
</dbReference>
<dbReference type="SMR" id="Q6BDA0"/>
<dbReference type="BioGRID" id="15583">
    <property type="interactions" value="1"/>
</dbReference>
<dbReference type="DIP" id="DIP-46102N"/>
<dbReference type="FunCoup" id="Q6BDA0">
    <property type="interactions" value="1957"/>
</dbReference>
<dbReference type="IntAct" id="Q6BDA0">
    <property type="interactions" value="1"/>
</dbReference>
<dbReference type="STRING" id="3702.Q6BDA0"/>
<dbReference type="PaxDb" id="3702-AT5G04240.1"/>
<dbReference type="ProMEX" id="Q6BDA0"/>
<dbReference type="ProteomicsDB" id="222231"/>
<dbReference type="EnsemblPlants" id="AT5G04240.1">
    <property type="protein sequence ID" value="AT5G04240.1"/>
    <property type="gene ID" value="AT5G04240"/>
</dbReference>
<dbReference type="GeneID" id="830303"/>
<dbReference type="Gramene" id="AT5G04240.1">
    <property type="protein sequence ID" value="AT5G04240.1"/>
    <property type="gene ID" value="AT5G04240"/>
</dbReference>
<dbReference type="KEGG" id="ath:AT5G04240"/>
<dbReference type="Araport" id="AT5G04240"/>
<dbReference type="TAIR" id="AT5G04240">
    <property type="gene designation" value="ELF6"/>
</dbReference>
<dbReference type="eggNOG" id="KOG1246">
    <property type="taxonomic scope" value="Eukaryota"/>
</dbReference>
<dbReference type="eggNOG" id="KOG1721">
    <property type="taxonomic scope" value="Eukaryota"/>
</dbReference>
<dbReference type="HOGENOM" id="CLU_001687_1_0_1"/>
<dbReference type="InParanoid" id="Q6BDA0"/>
<dbReference type="OMA" id="DWTSRMG"/>
<dbReference type="OrthoDB" id="9547406at2759"/>
<dbReference type="PhylomeDB" id="Q6BDA0"/>
<dbReference type="PRO" id="PR:Q6BDA0"/>
<dbReference type="Proteomes" id="UP000006548">
    <property type="component" value="Chromosome 5"/>
</dbReference>
<dbReference type="ExpressionAtlas" id="Q6BDA0">
    <property type="expression patterns" value="baseline and differential"/>
</dbReference>
<dbReference type="GO" id="GO:0005634">
    <property type="term" value="C:nucleus"/>
    <property type="evidence" value="ECO:0000314"/>
    <property type="project" value="TAIR"/>
</dbReference>
<dbReference type="GO" id="GO:0071558">
    <property type="term" value="F:histone H3K27me2/H3K27me3 demethylase activity"/>
    <property type="evidence" value="ECO:0000314"/>
    <property type="project" value="UniProtKB"/>
</dbReference>
<dbReference type="GO" id="GO:0008270">
    <property type="term" value="F:zinc ion binding"/>
    <property type="evidence" value="ECO:0007669"/>
    <property type="project" value="UniProtKB-KW"/>
</dbReference>
<dbReference type="GO" id="GO:0040029">
    <property type="term" value="P:epigenetic regulation of gene expression"/>
    <property type="evidence" value="ECO:0000315"/>
    <property type="project" value="UniProtKB"/>
</dbReference>
<dbReference type="GO" id="GO:0048579">
    <property type="term" value="P:negative regulation of long-day photoperiodism, flowering"/>
    <property type="evidence" value="ECO:0000315"/>
    <property type="project" value="TAIR"/>
</dbReference>
<dbReference type="GO" id="GO:0048577">
    <property type="term" value="P:negative regulation of short-day photoperiodism, flowering"/>
    <property type="evidence" value="ECO:0000315"/>
    <property type="project" value="TAIR"/>
</dbReference>
<dbReference type="GO" id="GO:0010628">
    <property type="term" value="P:positive regulation of gene expression"/>
    <property type="evidence" value="ECO:0000315"/>
    <property type="project" value="UniProtKB"/>
</dbReference>
<dbReference type="GO" id="GO:0006355">
    <property type="term" value="P:regulation of DNA-templated transcription"/>
    <property type="evidence" value="ECO:0000304"/>
    <property type="project" value="TAIR"/>
</dbReference>
<dbReference type="GO" id="GO:0010219">
    <property type="term" value="P:regulation of vernalization response"/>
    <property type="evidence" value="ECO:0000315"/>
    <property type="project" value="UniProtKB"/>
</dbReference>
<dbReference type="GO" id="GO:0009741">
    <property type="term" value="P:response to brassinosteroid"/>
    <property type="evidence" value="ECO:0000315"/>
    <property type="project" value="TAIR"/>
</dbReference>
<dbReference type="GO" id="GO:0009826">
    <property type="term" value="P:unidimensional cell growth"/>
    <property type="evidence" value="ECO:0000315"/>
    <property type="project" value="TAIR"/>
</dbReference>
<dbReference type="FunFam" id="3.30.160.60:FF:000747">
    <property type="entry name" value="Probable lysine-specific demethylase ELF6"/>
    <property type="match status" value="1"/>
</dbReference>
<dbReference type="Gene3D" id="3.30.160.60">
    <property type="entry name" value="Classic Zinc Finger"/>
    <property type="match status" value="3"/>
</dbReference>
<dbReference type="Gene3D" id="2.60.120.650">
    <property type="entry name" value="Cupin"/>
    <property type="match status" value="1"/>
</dbReference>
<dbReference type="InterPro" id="IPR003347">
    <property type="entry name" value="JmjC_dom"/>
</dbReference>
<dbReference type="InterPro" id="IPR003349">
    <property type="entry name" value="JmjN"/>
</dbReference>
<dbReference type="InterPro" id="IPR036236">
    <property type="entry name" value="Znf_C2H2_sf"/>
</dbReference>
<dbReference type="InterPro" id="IPR013087">
    <property type="entry name" value="Znf_C2H2_type"/>
</dbReference>
<dbReference type="PANTHER" id="PTHR10694">
    <property type="entry name" value="LYSINE-SPECIFIC DEMETHYLASE"/>
    <property type="match status" value="1"/>
</dbReference>
<dbReference type="PANTHER" id="PTHR10694:SF45">
    <property type="entry name" value="LYSINE-SPECIFIC DEMETHYLASE ELF6"/>
    <property type="match status" value="1"/>
</dbReference>
<dbReference type="Pfam" id="PF02373">
    <property type="entry name" value="JmjC"/>
    <property type="match status" value="1"/>
</dbReference>
<dbReference type="Pfam" id="PF02375">
    <property type="entry name" value="JmjN"/>
    <property type="match status" value="1"/>
</dbReference>
<dbReference type="SMART" id="SM00558">
    <property type="entry name" value="JmjC"/>
    <property type="match status" value="1"/>
</dbReference>
<dbReference type="SMART" id="SM00545">
    <property type="entry name" value="JmjN"/>
    <property type="match status" value="1"/>
</dbReference>
<dbReference type="SMART" id="SM00355">
    <property type="entry name" value="ZnF_C2H2"/>
    <property type="match status" value="4"/>
</dbReference>
<dbReference type="SUPFAM" id="SSF57667">
    <property type="entry name" value="beta-beta-alpha zinc fingers"/>
    <property type="match status" value="2"/>
</dbReference>
<dbReference type="SUPFAM" id="SSF51197">
    <property type="entry name" value="Clavaminate synthase-like"/>
    <property type="match status" value="1"/>
</dbReference>
<dbReference type="PROSITE" id="PS51184">
    <property type="entry name" value="JMJC"/>
    <property type="match status" value="1"/>
</dbReference>
<dbReference type="PROSITE" id="PS51183">
    <property type="entry name" value="JMJN"/>
    <property type="match status" value="1"/>
</dbReference>
<dbReference type="PROSITE" id="PS00028">
    <property type="entry name" value="ZINC_FINGER_C2H2_1"/>
    <property type="match status" value="3"/>
</dbReference>
<dbReference type="PROSITE" id="PS50157">
    <property type="entry name" value="ZINC_FINGER_C2H2_2"/>
    <property type="match status" value="3"/>
</dbReference>
<keyword id="KW-0010">Activator</keyword>
<keyword id="KW-0156">Chromatin regulator</keyword>
<keyword id="KW-0223">Dioxygenase</keyword>
<keyword id="KW-0408">Iron</keyword>
<keyword id="KW-0479">Metal-binding</keyword>
<keyword id="KW-0539">Nucleus</keyword>
<keyword id="KW-0560">Oxidoreductase</keyword>
<keyword id="KW-1185">Reference proteome</keyword>
<keyword id="KW-0677">Repeat</keyword>
<keyword id="KW-0804">Transcription</keyword>
<keyword id="KW-0805">Transcription regulation</keyword>
<keyword id="KW-0862">Zinc</keyword>
<keyword id="KW-0863">Zinc-finger</keyword>